<accession>Q17RR3</accession>
<name>LIPR3_HUMAN</name>
<feature type="signal peptide" evidence="2">
    <location>
        <begin position="1"/>
        <end position="17"/>
    </location>
</feature>
<feature type="chain" id="PRO_0000286602" description="Pancreatic lipase-related protein 3">
    <location>
        <begin position="18"/>
        <end position="467"/>
    </location>
</feature>
<feature type="domain" description="PLAT">
    <location>
        <begin position="355"/>
        <end position="467"/>
    </location>
</feature>
<feature type="active site" description="Nucleophile" evidence="1">
    <location>
        <position position="168"/>
    </location>
</feature>
<feature type="active site" description="Charge relay system" evidence="3">
    <location>
        <position position="191"/>
    </location>
</feature>
<feature type="active site" description="Charge relay system" evidence="3">
    <location>
        <position position="279"/>
    </location>
</feature>
<feature type="glycosylation site" description="N-linked (GlcNAc...) asparagine" evidence="2">
    <location>
        <position position="74"/>
    </location>
</feature>
<feature type="glycosylation site" description="N-linked (GlcNAc...) asparagine" evidence="2">
    <location>
        <position position="125"/>
    </location>
</feature>
<feature type="disulfide bond" evidence="1">
    <location>
        <begin position="21"/>
        <end position="27"/>
    </location>
</feature>
<feature type="disulfide bond" evidence="1">
    <location>
        <begin position="107"/>
        <end position="118"/>
    </location>
</feature>
<feature type="disulfide bond" evidence="1">
    <location>
        <begin position="252"/>
        <end position="277"/>
    </location>
</feature>
<feature type="disulfide bond" evidence="1">
    <location>
        <begin position="301"/>
        <end position="312"/>
    </location>
</feature>
<feature type="disulfide bond" evidence="1">
    <location>
        <begin position="315"/>
        <end position="320"/>
    </location>
</feature>
<feature type="disulfide bond" evidence="1">
    <location>
        <begin position="451"/>
        <end position="467"/>
    </location>
</feature>
<feature type="sequence variant" id="VAR_032141" description="In dbSNP:rs10885929.">
    <original>L</original>
    <variation>F</variation>
    <location>
        <position position="2"/>
    </location>
</feature>
<feature type="sequence variant" id="VAR_032142" description="In dbSNP:rs7077408.">
    <original>F</original>
    <variation>L</variation>
    <location>
        <position position="332"/>
    </location>
</feature>
<feature type="sequence variant" id="VAR_060285" description="In dbSNP:rs10736251." evidence="4">
    <original>V</original>
    <variation>I</variation>
    <location>
        <position position="381"/>
    </location>
</feature>
<feature type="sequence variant" id="VAR_060286" description="In dbSNP:rs1897519." evidence="4">
    <original>R</original>
    <variation>G</variation>
    <location>
        <position position="382"/>
    </location>
</feature>
<feature type="sequence variant" id="VAR_032143" description="In dbSNP:rs2116286.">
    <original>F</original>
    <variation>Y</variation>
    <location>
        <position position="450"/>
    </location>
</feature>
<dbReference type="EC" id="3.1.1.3"/>
<dbReference type="EMBL" id="AC011328">
    <property type="status" value="NOT_ANNOTATED_CDS"/>
    <property type="molecule type" value="Genomic_DNA"/>
</dbReference>
<dbReference type="EMBL" id="BC117224">
    <property type="protein sequence ID" value="AAI17225.1"/>
    <property type="molecule type" value="mRNA"/>
</dbReference>
<dbReference type="CCDS" id="CCDS31292.1"/>
<dbReference type="RefSeq" id="NP_001011709.2">
    <property type="nucleotide sequence ID" value="NM_001011709.3"/>
</dbReference>
<dbReference type="SMR" id="Q17RR3"/>
<dbReference type="FunCoup" id="Q17RR3">
    <property type="interactions" value="62"/>
</dbReference>
<dbReference type="STRING" id="9606.ENSP00000358232"/>
<dbReference type="ESTHER" id="human-PNLIPRP3">
    <property type="family name" value="Pancreatic_lipase"/>
</dbReference>
<dbReference type="GlyCosmos" id="Q17RR3">
    <property type="glycosylation" value="2 sites, No reported glycans"/>
</dbReference>
<dbReference type="GlyGen" id="Q17RR3">
    <property type="glycosylation" value="4 sites, 1 N-linked glycan (1 site)"/>
</dbReference>
<dbReference type="iPTMnet" id="Q17RR3"/>
<dbReference type="PhosphoSitePlus" id="Q17RR3"/>
<dbReference type="BioMuta" id="PNLIPRP3"/>
<dbReference type="DMDM" id="269849614"/>
<dbReference type="MassIVE" id="Q17RR3"/>
<dbReference type="PaxDb" id="9606-ENSP00000358232"/>
<dbReference type="PeptideAtlas" id="Q17RR3"/>
<dbReference type="ProteomicsDB" id="61163"/>
<dbReference type="Antibodypedia" id="52438">
    <property type="antibodies" value="107 antibodies from 15 providers"/>
</dbReference>
<dbReference type="DNASU" id="119548"/>
<dbReference type="Ensembl" id="ENST00000369230.4">
    <property type="protein sequence ID" value="ENSP00000358232.3"/>
    <property type="gene ID" value="ENSG00000203837.5"/>
</dbReference>
<dbReference type="GeneID" id="119548"/>
<dbReference type="KEGG" id="hsa:119548"/>
<dbReference type="MANE-Select" id="ENST00000369230.4">
    <property type="protein sequence ID" value="ENSP00000358232.3"/>
    <property type="RefSeq nucleotide sequence ID" value="NM_001011709.3"/>
    <property type="RefSeq protein sequence ID" value="NP_001011709.2"/>
</dbReference>
<dbReference type="UCSC" id="uc001lcl.5">
    <property type="organism name" value="human"/>
</dbReference>
<dbReference type="AGR" id="HGNC:23492"/>
<dbReference type="CTD" id="119548"/>
<dbReference type="DisGeNET" id="119548"/>
<dbReference type="GeneCards" id="PNLIPRP3"/>
<dbReference type="HGNC" id="HGNC:23492">
    <property type="gene designation" value="PNLIPRP3"/>
</dbReference>
<dbReference type="HPA" id="ENSG00000203837">
    <property type="expression patterns" value="Tissue enhanced (breast, skin)"/>
</dbReference>
<dbReference type="neXtProt" id="NX_Q17RR3"/>
<dbReference type="OpenTargets" id="ENSG00000203837"/>
<dbReference type="PharmGKB" id="PA134954941"/>
<dbReference type="VEuPathDB" id="HostDB:ENSG00000203837"/>
<dbReference type="eggNOG" id="ENOG502SHK7">
    <property type="taxonomic scope" value="Eukaryota"/>
</dbReference>
<dbReference type="GeneTree" id="ENSGT00940000163197"/>
<dbReference type="HOGENOM" id="CLU_027171_0_2_1"/>
<dbReference type="InParanoid" id="Q17RR3"/>
<dbReference type="OMA" id="HARSHQF"/>
<dbReference type="OrthoDB" id="199913at2759"/>
<dbReference type="PAN-GO" id="Q17RR3">
    <property type="GO annotations" value="3 GO annotations based on evolutionary models"/>
</dbReference>
<dbReference type="PhylomeDB" id="Q17RR3"/>
<dbReference type="TreeFam" id="TF324997"/>
<dbReference type="PathwayCommons" id="Q17RR3"/>
<dbReference type="Reactome" id="R-HSA-192456">
    <property type="pathway name" value="Digestion of dietary lipid"/>
</dbReference>
<dbReference type="SignaLink" id="Q17RR3"/>
<dbReference type="BioGRID-ORCS" id="119548">
    <property type="hits" value="9 hits in 1144 CRISPR screens"/>
</dbReference>
<dbReference type="ChiTaRS" id="PNLIPRP3">
    <property type="organism name" value="human"/>
</dbReference>
<dbReference type="GenomeRNAi" id="119548"/>
<dbReference type="Pharos" id="Q17RR3">
    <property type="development level" value="Tdark"/>
</dbReference>
<dbReference type="PRO" id="PR:Q17RR3"/>
<dbReference type="Proteomes" id="UP000005640">
    <property type="component" value="Chromosome 10"/>
</dbReference>
<dbReference type="RNAct" id="Q17RR3">
    <property type="molecule type" value="protein"/>
</dbReference>
<dbReference type="Bgee" id="ENSG00000203837">
    <property type="expression patterns" value="Expressed in upper leg skin and 68 other cell types or tissues"/>
</dbReference>
<dbReference type="GO" id="GO:0005576">
    <property type="term" value="C:extracellular region"/>
    <property type="evidence" value="ECO:0007669"/>
    <property type="project" value="UniProtKB-SubCell"/>
</dbReference>
<dbReference type="GO" id="GO:0004465">
    <property type="term" value="F:lipoprotein lipase activity"/>
    <property type="evidence" value="ECO:0000318"/>
    <property type="project" value="GO_Central"/>
</dbReference>
<dbReference type="GO" id="GO:0008970">
    <property type="term" value="F:phospholipase A1 activity"/>
    <property type="evidence" value="ECO:0000318"/>
    <property type="project" value="GO_Central"/>
</dbReference>
<dbReference type="GO" id="GO:0042632">
    <property type="term" value="P:cholesterol homeostasis"/>
    <property type="evidence" value="ECO:0000318"/>
    <property type="project" value="GO_Central"/>
</dbReference>
<dbReference type="GO" id="GO:0006633">
    <property type="term" value="P:fatty acid biosynthetic process"/>
    <property type="evidence" value="ECO:0000318"/>
    <property type="project" value="GO_Central"/>
</dbReference>
<dbReference type="GO" id="GO:0034375">
    <property type="term" value="P:high-density lipoprotein particle remodeling"/>
    <property type="evidence" value="ECO:0000318"/>
    <property type="project" value="GO_Central"/>
</dbReference>
<dbReference type="GO" id="GO:0019433">
    <property type="term" value="P:triglyceride catabolic process"/>
    <property type="evidence" value="ECO:0000318"/>
    <property type="project" value="GO_Central"/>
</dbReference>
<dbReference type="CDD" id="cd00707">
    <property type="entry name" value="Pancreat_lipase_like"/>
    <property type="match status" value="1"/>
</dbReference>
<dbReference type="CDD" id="cd01759">
    <property type="entry name" value="PLAT_PL"/>
    <property type="match status" value="1"/>
</dbReference>
<dbReference type="FunFam" id="2.60.60.20:FF:000003">
    <property type="entry name" value="Triacylglycerol lipase"/>
    <property type="match status" value="1"/>
</dbReference>
<dbReference type="FunFam" id="3.40.50.1820:FF:000157">
    <property type="entry name" value="Triacylglycerol lipase"/>
    <property type="match status" value="1"/>
</dbReference>
<dbReference type="Gene3D" id="3.40.50.1820">
    <property type="entry name" value="alpha/beta hydrolase"/>
    <property type="match status" value="1"/>
</dbReference>
<dbReference type="Gene3D" id="2.60.60.20">
    <property type="entry name" value="PLAT/LH2 domain"/>
    <property type="match status" value="1"/>
</dbReference>
<dbReference type="InterPro" id="IPR029058">
    <property type="entry name" value="AB_hydrolase_fold"/>
</dbReference>
<dbReference type="InterPro" id="IPR013818">
    <property type="entry name" value="Lipase"/>
</dbReference>
<dbReference type="InterPro" id="IPR016272">
    <property type="entry name" value="Lipase_LIPH"/>
</dbReference>
<dbReference type="InterPro" id="IPR033906">
    <property type="entry name" value="Lipase_N"/>
</dbReference>
<dbReference type="InterPro" id="IPR002331">
    <property type="entry name" value="Lipase_panc"/>
</dbReference>
<dbReference type="InterPro" id="IPR001024">
    <property type="entry name" value="PLAT/LH2_dom"/>
</dbReference>
<dbReference type="InterPro" id="IPR036392">
    <property type="entry name" value="PLAT/LH2_dom_sf"/>
</dbReference>
<dbReference type="InterPro" id="IPR000734">
    <property type="entry name" value="TAG_lipase"/>
</dbReference>
<dbReference type="PANTHER" id="PTHR11610">
    <property type="entry name" value="LIPASE"/>
    <property type="match status" value="1"/>
</dbReference>
<dbReference type="PANTHER" id="PTHR11610:SF100">
    <property type="entry name" value="PANCREATIC LIPASE-RELATED PROTEIN 3"/>
    <property type="match status" value="1"/>
</dbReference>
<dbReference type="Pfam" id="PF00151">
    <property type="entry name" value="Lipase"/>
    <property type="match status" value="1"/>
</dbReference>
<dbReference type="Pfam" id="PF01477">
    <property type="entry name" value="PLAT"/>
    <property type="match status" value="1"/>
</dbReference>
<dbReference type="PIRSF" id="PIRSF000865">
    <property type="entry name" value="Lipoprotein_lipase_LIPH"/>
    <property type="match status" value="1"/>
</dbReference>
<dbReference type="PRINTS" id="PR00823">
    <property type="entry name" value="PANCLIPASE"/>
</dbReference>
<dbReference type="PRINTS" id="PR00821">
    <property type="entry name" value="TAGLIPASE"/>
</dbReference>
<dbReference type="SUPFAM" id="SSF53474">
    <property type="entry name" value="alpha/beta-Hydrolases"/>
    <property type="match status" value="1"/>
</dbReference>
<dbReference type="SUPFAM" id="SSF49723">
    <property type="entry name" value="Lipase/lipooxygenase domain (PLAT/LH2 domain)"/>
    <property type="match status" value="1"/>
</dbReference>
<dbReference type="PROSITE" id="PS00120">
    <property type="entry name" value="LIPASE_SER"/>
    <property type="match status" value="1"/>
</dbReference>
<reference key="1">
    <citation type="journal article" date="2004" name="Nature">
        <title>The DNA sequence and comparative analysis of human chromosome 10.</title>
        <authorList>
            <person name="Deloukas P."/>
            <person name="Earthrowl M.E."/>
            <person name="Grafham D.V."/>
            <person name="Rubenfield M."/>
            <person name="French L."/>
            <person name="Steward C.A."/>
            <person name="Sims S.K."/>
            <person name="Jones M.C."/>
            <person name="Searle S."/>
            <person name="Scott C."/>
            <person name="Howe K."/>
            <person name="Hunt S.E."/>
            <person name="Andrews T.D."/>
            <person name="Gilbert J.G.R."/>
            <person name="Swarbreck D."/>
            <person name="Ashurst J.L."/>
            <person name="Taylor A."/>
            <person name="Battles J."/>
            <person name="Bird C.P."/>
            <person name="Ainscough R."/>
            <person name="Almeida J.P."/>
            <person name="Ashwell R.I.S."/>
            <person name="Ambrose K.D."/>
            <person name="Babbage A.K."/>
            <person name="Bagguley C.L."/>
            <person name="Bailey J."/>
            <person name="Banerjee R."/>
            <person name="Bates K."/>
            <person name="Beasley H."/>
            <person name="Bray-Allen S."/>
            <person name="Brown A.J."/>
            <person name="Brown J.Y."/>
            <person name="Burford D.C."/>
            <person name="Burrill W."/>
            <person name="Burton J."/>
            <person name="Cahill P."/>
            <person name="Camire D."/>
            <person name="Carter N.P."/>
            <person name="Chapman J.C."/>
            <person name="Clark S.Y."/>
            <person name="Clarke G."/>
            <person name="Clee C.M."/>
            <person name="Clegg S."/>
            <person name="Corby N."/>
            <person name="Coulson A."/>
            <person name="Dhami P."/>
            <person name="Dutta I."/>
            <person name="Dunn M."/>
            <person name="Faulkner L."/>
            <person name="Frankish A."/>
            <person name="Frankland J.A."/>
            <person name="Garner P."/>
            <person name="Garnett J."/>
            <person name="Gribble S."/>
            <person name="Griffiths C."/>
            <person name="Grocock R."/>
            <person name="Gustafson E."/>
            <person name="Hammond S."/>
            <person name="Harley J.L."/>
            <person name="Hart E."/>
            <person name="Heath P.D."/>
            <person name="Ho T.P."/>
            <person name="Hopkins B."/>
            <person name="Horne J."/>
            <person name="Howden P.J."/>
            <person name="Huckle E."/>
            <person name="Hynds C."/>
            <person name="Johnson C."/>
            <person name="Johnson D."/>
            <person name="Kana A."/>
            <person name="Kay M."/>
            <person name="Kimberley A.M."/>
            <person name="Kershaw J.K."/>
            <person name="Kokkinaki M."/>
            <person name="Laird G.K."/>
            <person name="Lawlor S."/>
            <person name="Lee H.M."/>
            <person name="Leongamornlert D.A."/>
            <person name="Laird G."/>
            <person name="Lloyd C."/>
            <person name="Lloyd D.M."/>
            <person name="Loveland J."/>
            <person name="Lovell J."/>
            <person name="McLaren S."/>
            <person name="McLay K.E."/>
            <person name="McMurray A."/>
            <person name="Mashreghi-Mohammadi M."/>
            <person name="Matthews L."/>
            <person name="Milne S."/>
            <person name="Nickerson T."/>
            <person name="Nguyen M."/>
            <person name="Overton-Larty E."/>
            <person name="Palmer S.A."/>
            <person name="Pearce A.V."/>
            <person name="Peck A.I."/>
            <person name="Pelan S."/>
            <person name="Phillimore B."/>
            <person name="Porter K."/>
            <person name="Rice C.M."/>
            <person name="Rogosin A."/>
            <person name="Ross M.T."/>
            <person name="Sarafidou T."/>
            <person name="Sehra H.K."/>
            <person name="Shownkeen R."/>
            <person name="Skuce C.D."/>
            <person name="Smith M."/>
            <person name="Standring L."/>
            <person name="Sycamore N."/>
            <person name="Tester J."/>
            <person name="Thorpe A."/>
            <person name="Torcasso W."/>
            <person name="Tracey A."/>
            <person name="Tromans A."/>
            <person name="Tsolas J."/>
            <person name="Wall M."/>
            <person name="Walsh J."/>
            <person name="Wang H."/>
            <person name="Weinstock K."/>
            <person name="West A.P."/>
            <person name="Willey D.L."/>
            <person name="Whitehead S.L."/>
            <person name="Wilming L."/>
            <person name="Wray P.W."/>
            <person name="Young L."/>
            <person name="Chen Y."/>
            <person name="Lovering R.C."/>
            <person name="Moschonas N.K."/>
            <person name="Siebert R."/>
            <person name="Fechtel K."/>
            <person name="Bentley D."/>
            <person name="Durbin R.M."/>
            <person name="Hubbard T."/>
            <person name="Doucette-Stamm L."/>
            <person name="Beck S."/>
            <person name="Smith D.R."/>
            <person name="Rogers J."/>
        </authorList>
    </citation>
    <scope>NUCLEOTIDE SEQUENCE [LARGE SCALE GENOMIC DNA]</scope>
</reference>
<reference key="2">
    <citation type="journal article" date="2004" name="Genome Res.">
        <title>The status, quality, and expansion of the NIH full-length cDNA project: the Mammalian Gene Collection (MGC).</title>
        <authorList>
            <consortium name="The MGC Project Team"/>
        </authorList>
    </citation>
    <scope>NUCLEOTIDE SEQUENCE [LARGE SCALE MRNA]</scope>
    <scope>VARIANTS ILE-381 AND GLY-382</scope>
</reference>
<reference key="3">
    <citation type="journal article" date="2009" name="Asian Pac. J. Cancer Prev.">
        <title>Novel PNLIPRP3 and DOCK8 gene expression and prognostic implications of DNA loss on chromosome 10q25.3 in hepatocellular carcinoma.</title>
        <authorList>
            <person name="Saelee P."/>
            <person name="Wongkham S."/>
            <person name="Puapairoj A."/>
            <person name="Khuntikeo N."/>
            <person name="Petmitr S."/>
            <person name="Chariyalertsak S."/>
            <person name="Sumethchotimaytha W."/>
            <person name="Karalak A."/>
        </authorList>
    </citation>
    <scope>TISSUE SPECIFICITY</scope>
</reference>
<proteinExistence type="evidence at protein level"/>
<organism>
    <name type="scientific">Homo sapiens</name>
    <name type="common">Human</name>
    <dbReference type="NCBI Taxonomy" id="9606"/>
    <lineage>
        <taxon>Eukaryota</taxon>
        <taxon>Metazoa</taxon>
        <taxon>Chordata</taxon>
        <taxon>Craniata</taxon>
        <taxon>Vertebrata</taxon>
        <taxon>Euteleostomi</taxon>
        <taxon>Mammalia</taxon>
        <taxon>Eutheria</taxon>
        <taxon>Euarchontoglires</taxon>
        <taxon>Primates</taxon>
        <taxon>Haplorrhini</taxon>
        <taxon>Catarrhini</taxon>
        <taxon>Hominidae</taxon>
        <taxon>Homo</taxon>
    </lineage>
</organism>
<comment type="catalytic activity">
    <reaction>
        <text>a triacylglycerol + H2O = a diacylglycerol + a fatty acid + H(+)</text>
        <dbReference type="Rhea" id="RHEA:12044"/>
        <dbReference type="ChEBI" id="CHEBI:15377"/>
        <dbReference type="ChEBI" id="CHEBI:15378"/>
        <dbReference type="ChEBI" id="CHEBI:17855"/>
        <dbReference type="ChEBI" id="CHEBI:18035"/>
        <dbReference type="ChEBI" id="CHEBI:28868"/>
        <dbReference type="EC" id="3.1.1.3"/>
    </reaction>
</comment>
<comment type="subcellular location">
    <subcellularLocation>
        <location evidence="6">Secreted</location>
    </subcellularLocation>
</comment>
<comment type="tissue specificity">
    <text evidence="5">Overexpressed in hepatocellular carcinoma.</text>
</comment>
<comment type="similarity">
    <text evidence="6">Belongs to the AB hydrolase superfamily. Lipase family.</text>
</comment>
<evidence type="ECO:0000250" key="1"/>
<evidence type="ECO:0000255" key="2"/>
<evidence type="ECO:0000255" key="3">
    <source>
        <dbReference type="PROSITE-ProRule" id="PRU10037"/>
    </source>
</evidence>
<evidence type="ECO:0000269" key="4">
    <source>
    </source>
</evidence>
<evidence type="ECO:0000269" key="5">
    <source>
    </source>
</evidence>
<evidence type="ECO:0000305" key="6"/>
<keyword id="KW-1015">Disulfide bond</keyword>
<keyword id="KW-0325">Glycoprotein</keyword>
<keyword id="KW-0378">Hydrolase</keyword>
<keyword id="KW-0442">Lipid degradation</keyword>
<keyword id="KW-0443">Lipid metabolism</keyword>
<keyword id="KW-1267">Proteomics identification</keyword>
<keyword id="KW-1185">Reference proteome</keyword>
<keyword id="KW-0964">Secreted</keyword>
<keyword id="KW-0732">Signal</keyword>
<protein>
    <recommendedName>
        <fullName>Pancreatic lipase-related protein 3</fullName>
        <shortName>PL-RP3</shortName>
        <ecNumber>3.1.1.3</ecNumber>
    </recommendedName>
</protein>
<gene>
    <name type="primary">PNLIPRP3</name>
</gene>
<sequence length="467" mass="52254">MLGIWIVAFLFFGTSRGKEVCYERLGCFKDGLPWTRTFSTELVGLPWSPEKINTRFLLYTIHNPNAYQEISAVNSSTIQASYFGTDKITRINIAGWKTDGKWQRDMCNVLLQLEDINCINLDWINGSREYIHAVNNLRVVGAEVAYFIDVLMKKFEYSPSKVHLIGHSLGAHLAGEAGSRIPGLGRITGLDPAGPFFHNTPKEVRLDPSDANFVDVIHTNAARILFELGVGTIDACGHLDFYPNGGKHMPGCEDLITPLLKFNFNAYKKEMASFFDCNHARSYQFYAESILNPDAFIAYPCRSYTSFKAGNCFFCSKEGCPTMGHFADRFHFKNMKTNGSHYFLNTGSLSPFARWRHKLSVKLSGSEVTQGTVFLRVGGAVRKTGEFAIVSGKLEPGMTYTKLIDADVNVGNITSVQFIWKKHLFEDSQNKLGAEMVINTSGKYGYKSTFCSQDIMGPNILQNLKPC</sequence>